<proteinExistence type="inferred from homology"/>
<reference key="1">
    <citation type="journal article" date="2005" name="J. Bacteriol.">
        <title>Insights on evolution of virulence and resistance from the complete genome analysis of an early methicillin-resistant Staphylococcus aureus strain and a biofilm-producing methicillin-resistant Staphylococcus epidermidis strain.</title>
        <authorList>
            <person name="Gill S.R."/>
            <person name="Fouts D.E."/>
            <person name="Archer G.L."/>
            <person name="Mongodin E.F."/>
            <person name="DeBoy R.T."/>
            <person name="Ravel J."/>
            <person name="Paulsen I.T."/>
            <person name="Kolonay J.F."/>
            <person name="Brinkac L.M."/>
            <person name="Beanan M.J."/>
            <person name="Dodson R.J."/>
            <person name="Daugherty S.C."/>
            <person name="Madupu R."/>
            <person name="Angiuoli S.V."/>
            <person name="Durkin A.S."/>
            <person name="Haft D.H."/>
            <person name="Vamathevan J.J."/>
            <person name="Khouri H."/>
            <person name="Utterback T.R."/>
            <person name="Lee C."/>
            <person name="Dimitrov G."/>
            <person name="Jiang L."/>
            <person name="Qin H."/>
            <person name="Weidman J."/>
            <person name="Tran K."/>
            <person name="Kang K.H."/>
            <person name="Hance I.R."/>
            <person name="Nelson K.E."/>
            <person name="Fraser C.M."/>
        </authorList>
    </citation>
    <scope>NUCLEOTIDE SEQUENCE [LARGE SCALE GENOMIC DNA]</scope>
    <source>
        <strain>COL</strain>
    </source>
</reference>
<organism>
    <name type="scientific">Staphylococcus aureus (strain COL)</name>
    <dbReference type="NCBI Taxonomy" id="93062"/>
    <lineage>
        <taxon>Bacteria</taxon>
        <taxon>Bacillati</taxon>
        <taxon>Bacillota</taxon>
        <taxon>Bacilli</taxon>
        <taxon>Bacillales</taxon>
        <taxon>Staphylococcaceae</taxon>
        <taxon>Staphylococcus</taxon>
    </lineage>
</organism>
<protein>
    <recommendedName>
        <fullName evidence="1">2-isopropylmalate synthase</fullName>
        <ecNumber evidence="1">2.3.3.13</ecNumber>
    </recommendedName>
    <alternativeName>
        <fullName evidence="1">Alpha-IPM synthase</fullName>
    </alternativeName>
    <alternativeName>
        <fullName evidence="1">Alpha-isopropylmalate synthase</fullName>
    </alternativeName>
</protein>
<evidence type="ECO:0000255" key="1">
    <source>
        <dbReference type="HAMAP-Rule" id="MF_01025"/>
    </source>
</evidence>
<keyword id="KW-0028">Amino-acid biosynthesis</keyword>
<keyword id="KW-0100">Branched-chain amino acid biosynthesis</keyword>
<keyword id="KW-0963">Cytoplasm</keyword>
<keyword id="KW-0432">Leucine biosynthesis</keyword>
<keyword id="KW-0464">Manganese</keyword>
<keyword id="KW-0479">Metal-binding</keyword>
<keyword id="KW-0808">Transferase</keyword>
<dbReference type="EC" id="2.3.3.13" evidence="1"/>
<dbReference type="EMBL" id="CP000046">
    <property type="protein sequence ID" value="AAW37009.1"/>
    <property type="molecule type" value="Genomic_DNA"/>
</dbReference>
<dbReference type="RefSeq" id="WP_000094576.1">
    <property type="nucleotide sequence ID" value="NZ_JBGOFO010000006.1"/>
</dbReference>
<dbReference type="SMR" id="Q5HEE4"/>
<dbReference type="KEGG" id="sac:SACOL2046"/>
<dbReference type="HOGENOM" id="CLU_022158_0_1_9"/>
<dbReference type="UniPathway" id="UPA00048">
    <property type="reaction ID" value="UER00070"/>
</dbReference>
<dbReference type="Proteomes" id="UP000000530">
    <property type="component" value="Chromosome"/>
</dbReference>
<dbReference type="GO" id="GO:0005737">
    <property type="term" value="C:cytoplasm"/>
    <property type="evidence" value="ECO:0007669"/>
    <property type="project" value="UniProtKB-SubCell"/>
</dbReference>
<dbReference type="GO" id="GO:0003852">
    <property type="term" value="F:2-isopropylmalate synthase activity"/>
    <property type="evidence" value="ECO:0007669"/>
    <property type="project" value="UniProtKB-UniRule"/>
</dbReference>
<dbReference type="GO" id="GO:0003985">
    <property type="term" value="F:acetyl-CoA C-acetyltransferase activity"/>
    <property type="evidence" value="ECO:0007669"/>
    <property type="project" value="UniProtKB-UniRule"/>
</dbReference>
<dbReference type="GO" id="GO:0030145">
    <property type="term" value="F:manganese ion binding"/>
    <property type="evidence" value="ECO:0007669"/>
    <property type="project" value="UniProtKB-UniRule"/>
</dbReference>
<dbReference type="GO" id="GO:0009098">
    <property type="term" value="P:L-leucine biosynthetic process"/>
    <property type="evidence" value="ECO:0007669"/>
    <property type="project" value="UniProtKB-UniRule"/>
</dbReference>
<dbReference type="CDD" id="cd07940">
    <property type="entry name" value="DRE_TIM_IPMS"/>
    <property type="match status" value="1"/>
</dbReference>
<dbReference type="FunFam" id="1.10.238.260:FF:000001">
    <property type="entry name" value="2-isopropylmalate synthase"/>
    <property type="match status" value="1"/>
</dbReference>
<dbReference type="FunFam" id="3.20.20.70:FF:000010">
    <property type="entry name" value="2-isopropylmalate synthase"/>
    <property type="match status" value="1"/>
</dbReference>
<dbReference type="FunFam" id="3.30.160.270:FF:000003">
    <property type="entry name" value="2-isopropylmalate synthase"/>
    <property type="match status" value="1"/>
</dbReference>
<dbReference type="Gene3D" id="1.10.238.260">
    <property type="match status" value="1"/>
</dbReference>
<dbReference type="Gene3D" id="3.30.160.270">
    <property type="match status" value="1"/>
</dbReference>
<dbReference type="Gene3D" id="3.20.20.70">
    <property type="entry name" value="Aldolase class I"/>
    <property type="match status" value="1"/>
</dbReference>
<dbReference type="HAMAP" id="MF_01025">
    <property type="entry name" value="LeuA_type1"/>
    <property type="match status" value="1"/>
</dbReference>
<dbReference type="InterPro" id="IPR050073">
    <property type="entry name" value="2-IPM_HCS-like"/>
</dbReference>
<dbReference type="InterPro" id="IPR013709">
    <property type="entry name" value="2-isopropylmalate_synth_dimer"/>
</dbReference>
<dbReference type="InterPro" id="IPR013785">
    <property type="entry name" value="Aldolase_TIM"/>
</dbReference>
<dbReference type="InterPro" id="IPR054691">
    <property type="entry name" value="LeuA/HCS_post-cat"/>
</dbReference>
<dbReference type="InterPro" id="IPR036230">
    <property type="entry name" value="LeuA_allosteric_dom_sf"/>
</dbReference>
<dbReference type="InterPro" id="IPR005671">
    <property type="entry name" value="LeuA_bact_synth"/>
</dbReference>
<dbReference type="InterPro" id="IPR000891">
    <property type="entry name" value="PYR_CT"/>
</dbReference>
<dbReference type="NCBIfam" id="TIGR00973">
    <property type="entry name" value="leuA_bact"/>
    <property type="match status" value="1"/>
</dbReference>
<dbReference type="NCBIfam" id="NF002086">
    <property type="entry name" value="PRK00915.1-3"/>
    <property type="match status" value="1"/>
</dbReference>
<dbReference type="NCBIfam" id="NF002088">
    <property type="entry name" value="PRK00915.1-5"/>
    <property type="match status" value="1"/>
</dbReference>
<dbReference type="PANTHER" id="PTHR10277:SF9">
    <property type="entry name" value="2-ISOPROPYLMALATE SYNTHASE 1, CHLOROPLASTIC-RELATED"/>
    <property type="match status" value="1"/>
</dbReference>
<dbReference type="PANTHER" id="PTHR10277">
    <property type="entry name" value="HOMOCITRATE SYNTHASE-RELATED"/>
    <property type="match status" value="1"/>
</dbReference>
<dbReference type="Pfam" id="PF22617">
    <property type="entry name" value="HCS_D2"/>
    <property type="match status" value="1"/>
</dbReference>
<dbReference type="Pfam" id="PF00682">
    <property type="entry name" value="HMGL-like"/>
    <property type="match status" value="1"/>
</dbReference>
<dbReference type="Pfam" id="PF08502">
    <property type="entry name" value="LeuA_dimer"/>
    <property type="match status" value="1"/>
</dbReference>
<dbReference type="SMART" id="SM00917">
    <property type="entry name" value="LeuA_dimer"/>
    <property type="match status" value="1"/>
</dbReference>
<dbReference type="SUPFAM" id="SSF110921">
    <property type="entry name" value="2-isopropylmalate synthase LeuA, allosteric (dimerisation) domain"/>
    <property type="match status" value="1"/>
</dbReference>
<dbReference type="SUPFAM" id="SSF51569">
    <property type="entry name" value="Aldolase"/>
    <property type="match status" value="1"/>
</dbReference>
<dbReference type="PROSITE" id="PS50991">
    <property type="entry name" value="PYR_CT"/>
    <property type="match status" value="1"/>
</dbReference>
<sequence length="509" mass="55675">MSSHIQIFDTTLRDGEQTPGVNFTFDERLRIALQLEKWGVDVIEAGFPASSTGSFKSVQAIAQTLTTTAVCGLARCKKSDIDAVYEATKDAAKPVVHVFIATSPIHLEHKLKMSQEDVLASIKEHVTYAKQLFDVVQFSPEDATRTELPFLVKCVQTAVDAGATVINIPDTVGYSYHDEYAHIFKTLTESVTSSNEIIYSAHCHDDLGMAVSNSLAAIEGGARRIEGTVNGIGERAGNAALEEVALALYVRNDHYGAQTALNLEETKKTSDLISRYAGIRVPRNKAIVGQNAFSHESGIHQDGVLKHRETYEIMTPQLVGVSTTELPLGKLSGKHAFSEKLKALGYDIDKEAQIDLFKQFKAIADKKKSVSDRDIHAIIQGSEHEHQALYKLETLQLQYVSSGLQSAVVVVKDKEGHIYQDSSIGTGSIVAIYNAVDRIFQKETELIDYRINSVTEGTDAQAEVHVNLLIEGKTVNGFGIDHDILQASCKAYVEAHAKFAAENVEKVGN</sequence>
<name>LEU1_STAAC</name>
<feature type="chain" id="PRO_0000140378" description="2-isopropylmalate synthase">
    <location>
        <begin position="1"/>
        <end position="509"/>
    </location>
</feature>
<feature type="domain" description="Pyruvate carboxyltransferase" evidence="1">
    <location>
        <begin position="5"/>
        <end position="267"/>
    </location>
</feature>
<feature type="region of interest" description="Regulatory domain" evidence="1">
    <location>
        <begin position="391"/>
        <end position="509"/>
    </location>
</feature>
<feature type="binding site" evidence="1">
    <location>
        <position position="14"/>
    </location>
    <ligand>
        <name>Mn(2+)</name>
        <dbReference type="ChEBI" id="CHEBI:29035"/>
    </ligand>
</feature>
<feature type="binding site" evidence="1">
    <location>
        <position position="202"/>
    </location>
    <ligand>
        <name>Mn(2+)</name>
        <dbReference type="ChEBI" id="CHEBI:29035"/>
    </ligand>
</feature>
<feature type="binding site" evidence="1">
    <location>
        <position position="204"/>
    </location>
    <ligand>
        <name>Mn(2+)</name>
        <dbReference type="ChEBI" id="CHEBI:29035"/>
    </ligand>
</feature>
<feature type="binding site" evidence="1">
    <location>
        <position position="238"/>
    </location>
    <ligand>
        <name>Mn(2+)</name>
        <dbReference type="ChEBI" id="CHEBI:29035"/>
    </ligand>
</feature>
<accession>Q5HEE4</accession>
<comment type="function">
    <text evidence="1">Catalyzes the condensation of the acetyl group of acetyl-CoA with 3-methyl-2-oxobutanoate (2-ketoisovalerate) to form 3-carboxy-3-hydroxy-4-methylpentanoate (2-isopropylmalate).</text>
</comment>
<comment type="catalytic activity">
    <reaction evidence="1">
        <text>3-methyl-2-oxobutanoate + acetyl-CoA + H2O = (2S)-2-isopropylmalate + CoA + H(+)</text>
        <dbReference type="Rhea" id="RHEA:21524"/>
        <dbReference type="ChEBI" id="CHEBI:1178"/>
        <dbReference type="ChEBI" id="CHEBI:11851"/>
        <dbReference type="ChEBI" id="CHEBI:15377"/>
        <dbReference type="ChEBI" id="CHEBI:15378"/>
        <dbReference type="ChEBI" id="CHEBI:57287"/>
        <dbReference type="ChEBI" id="CHEBI:57288"/>
        <dbReference type="EC" id="2.3.3.13"/>
    </reaction>
</comment>
<comment type="cofactor">
    <cofactor evidence="1">
        <name>Mn(2+)</name>
        <dbReference type="ChEBI" id="CHEBI:29035"/>
    </cofactor>
</comment>
<comment type="pathway">
    <text evidence="1">Amino-acid biosynthesis; L-leucine biosynthesis; L-leucine from 3-methyl-2-oxobutanoate: step 1/4.</text>
</comment>
<comment type="subunit">
    <text evidence="1">Homodimer.</text>
</comment>
<comment type="subcellular location">
    <subcellularLocation>
        <location evidence="1">Cytoplasm</location>
    </subcellularLocation>
</comment>
<comment type="similarity">
    <text evidence="1">Belongs to the alpha-IPM synthase/homocitrate synthase family. LeuA type 1 subfamily.</text>
</comment>
<gene>
    <name evidence="1" type="primary">leuA</name>
    <name type="ordered locus">SACOL2046</name>
</gene>